<evidence type="ECO:0000255" key="1">
    <source>
        <dbReference type="HAMAP-Rule" id="MF_00394"/>
    </source>
</evidence>
<protein>
    <recommendedName>
        <fullName evidence="1">Glycerol-3-phosphate dehydrogenase [NAD(P)+]</fullName>
        <ecNumber evidence="1">1.1.1.94</ecNumber>
    </recommendedName>
    <alternativeName>
        <fullName evidence="1">NAD(P)(+)-dependent glycerol-3-phosphate dehydrogenase</fullName>
    </alternativeName>
    <alternativeName>
        <fullName evidence="1">NAD(P)H-dependent dihydroxyacetone-phosphate reductase</fullName>
    </alternativeName>
</protein>
<organism>
    <name type="scientific">Cupriavidus pinatubonensis (strain JMP 134 / LMG 1197)</name>
    <name type="common">Cupriavidus necator (strain JMP 134)</name>
    <dbReference type="NCBI Taxonomy" id="264198"/>
    <lineage>
        <taxon>Bacteria</taxon>
        <taxon>Pseudomonadati</taxon>
        <taxon>Pseudomonadota</taxon>
        <taxon>Betaproteobacteria</taxon>
        <taxon>Burkholderiales</taxon>
        <taxon>Burkholderiaceae</taxon>
        <taxon>Cupriavidus</taxon>
    </lineage>
</organism>
<name>GPDA_CUPPJ</name>
<comment type="function">
    <text evidence="1">Catalyzes the reduction of the glycolytic intermediate dihydroxyacetone phosphate (DHAP) to sn-glycerol 3-phosphate (G3P), the key precursor for phospholipid synthesis.</text>
</comment>
<comment type="catalytic activity">
    <reaction evidence="1">
        <text>sn-glycerol 3-phosphate + NAD(+) = dihydroxyacetone phosphate + NADH + H(+)</text>
        <dbReference type="Rhea" id="RHEA:11092"/>
        <dbReference type="ChEBI" id="CHEBI:15378"/>
        <dbReference type="ChEBI" id="CHEBI:57540"/>
        <dbReference type="ChEBI" id="CHEBI:57597"/>
        <dbReference type="ChEBI" id="CHEBI:57642"/>
        <dbReference type="ChEBI" id="CHEBI:57945"/>
        <dbReference type="EC" id="1.1.1.94"/>
    </reaction>
    <physiologicalReaction direction="right-to-left" evidence="1">
        <dbReference type="Rhea" id="RHEA:11094"/>
    </physiologicalReaction>
</comment>
<comment type="catalytic activity">
    <reaction evidence="1">
        <text>sn-glycerol 3-phosphate + NADP(+) = dihydroxyacetone phosphate + NADPH + H(+)</text>
        <dbReference type="Rhea" id="RHEA:11096"/>
        <dbReference type="ChEBI" id="CHEBI:15378"/>
        <dbReference type="ChEBI" id="CHEBI:57597"/>
        <dbReference type="ChEBI" id="CHEBI:57642"/>
        <dbReference type="ChEBI" id="CHEBI:57783"/>
        <dbReference type="ChEBI" id="CHEBI:58349"/>
        <dbReference type="EC" id="1.1.1.94"/>
    </reaction>
    <physiologicalReaction direction="right-to-left" evidence="1">
        <dbReference type="Rhea" id="RHEA:11098"/>
    </physiologicalReaction>
</comment>
<comment type="pathway">
    <text evidence="1">Membrane lipid metabolism; glycerophospholipid metabolism.</text>
</comment>
<comment type="subcellular location">
    <subcellularLocation>
        <location evidence="1">Cytoplasm</location>
    </subcellularLocation>
</comment>
<comment type="similarity">
    <text evidence="1">Belongs to the NAD-dependent glycerol-3-phosphate dehydrogenase family.</text>
</comment>
<sequence length="347" mass="35750">MRRSTVRAAMKLTFLGAGAWGTALASHAAANHDVVLWGRDPAQLAAIAATGSNEAYLPGVPLSPRLRVEADFEQAVGHAADDPDGLVVVATPVSGLREMTRRLAGRGNGHVRMLWLCKGFEAGTHALPHQMVREELDAAGRTSGFDYGVLTGPSFAREVALGLPCALTVAGSVPTLADCAQAAFHHHAMRIYGSDDLTGVEVGGAVKNVLAIATGASDGLGLGLNARAALVTRGLAEMTRLGLALGGRAETFMGLAGVGDLILTATGDLSRNRKVGQQLAAGQSLDQILASLGHVAEGVRCAQAVAALAEACKIEMPITRAVCAVLFEGLSAADAVAQLLQRDARDE</sequence>
<accession>Q476J3</accession>
<dbReference type="EC" id="1.1.1.94" evidence="1"/>
<dbReference type="EMBL" id="CP000090">
    <property type="protein sequence ID" value="AAZ59690.1"/>
    <property type="molecule type" value="Genomic_DNA"/>
</dbReference>
<dbReference type="SMR" id="Q476J3"/>
<dbReference type="STRING" id="264198.Reut_A0308"/>
<dbReference type="KEGG" id="reu:Reut_A0308"/>
<dbReference type="eggNOG" id="COG0240">
    <property type="taxonomic scope" value="Bacteria"/>
</dbReference>
<dbReference type="HOGENOM" id="CLU_033449_0_2_4"/>
<dbReference type="UniPathway" id="UPA00940"/>
<dbReference type="GO" id="GO:0005829">
    <property type="term" value="C:cytosol"/>
    <property type="evidence" value="ECO:0007669"/>
    <property type="project" value="TreeGrafter"/>
</dbReference>
<dbReference type="GO" id="GO:0047952">
    <property type="term" value="F:glycerol-3-phosphate dehydrogenase [NAD(P)+] activity"/>
    <property type="evidence" value="ECO:0007669"/>
    <property type="project" value="UniProtKB-UniRule"/>
</dbReference>
<dbReference type="GO" id="GO:0051287">
    <property type="term" value="F:NAD binding"/>
    <property type="evidence" value="ECO:0007669"/>
    <property type="project" value="InterPro"/>
</dbReference>
<dbReference type="GO" id="GO:0005975">
    <property type="term" value="P:carbohydrate metabolic process"/>
    <property type="evidence" value="ECO:0007669"/>
    <property type="project" value="InterPro"/>
</dbReference>
<dbReference type="GO" id="GO:0046167">
    <property type="term" value="P:glycerol-3-phosphate biosynthetic process"/>
    <property type="evidence" value="ECO:0007669"/>
    <property type="project" value="UniProtKB-UniRule"/>
</dbReference>
<dbReference type="GO" id="GO:0046168">
    <property type="term" value="P:glycerol-3-phosphate catabolic process"/>
    <property type="evidence" value="ECO:0007669"/>
    <property type="project" value="InterPro"/>
</dbReference>
<dbReference type="GO" id="GO:0006650">
    <property type="term" value="P:glycerophospholipid metabolic process"/>
    <property type="evidence" value="ECO:0007669"/>
    <property type="project" value="UniProtKB-UniRule"/>
</dbReference>
<dbReference type="GO" id="GO:0008654">
    <property type="term" value="P:phospholipid biosynthetic process"/>
    <property type="evidence" value="ECO:0007669"/>
    <property type="project" value="UniProtKB-KW"/>
</dbReference>
<dbReference type="FunFam" id="1.10.1040.10:FF:000001">
    <property type="entry name" value="Glycerol-3-phosphate dehydrogenase [NAD(P)+]"/>
    <property type="match status" value="1"/>
</dbReference>
<dbReference type="Gene3D" id="1.10.1040.10">
    <property type="entry name" value="N-(1-d-carboxylethyl)-l-norvaline Dehydrogenase, domain 2"/>
    <property type="match status" value="1"/>
</dbReference>
<dbReference type="Gene3D" id="3.40.50.720">
    <property type="entry name" value="NAD(P)-binding Rossmann-like Domain"/>
    <property type="match status" value="1"/>
</dbReference>
<dbReference type="HAMAP" id="MF_00394">
    <property type="entry name" value="NAD_Glyc3P_dehydrog"/>
    <property type="match status" value="1"/>
</dbReference>
<dbReference type="InterPro" id="IPR008927">
    <property type="entry name" value="6-PGluconate_DH-like_C_sf"/>
</dbReference>
<dbReference type="InterPro" id="IPR013328">
    <property type="entry name" value="6PGD_dom2"/>
</dbReference>
<dbReference type="InterPro" id="IPR006168">
    <property type="entry name" value="G3P_DH_NAD-dep"/>
</dbReference>
<dbReference type="InterPro" id="IPR006109">
    <property type="entry name" value="G3P_DH_NAD-dep_C"/>
</dbReference>
<dbReference type="InterPro" id="IPR011128">
    <property type="entry name" value="G3P_DH_NAD-dep_N"/>
</dbReference>
<dbReference type="InterPro" id="IPR036291">
    <property type="entry name" value="NAD(P)-bd_dom_sf"/>
</dbReference>
<dbReference type="NCBIfam" id="NF000940">
    <property type="entry name" value="PRK00094.1-2"/>
    <property type="match status" value="1"/>
</dbReference>
<dbReference type="NCBIfam" id="NF000942">
    <property type="entry name" value="PRK00094.1-4"/>
    <property type="match status" value="1"/>
</dbReference>
<dbReference type="PANTHER" id="PTHR11728">
    <property type="entry name" value="GLYCEROL-3-PHOSPHATE DEHYDROGENASE"/>
    <property type="match status" value="1"/>
</dbReference>
<dbReference type="PANTHER" id="PTHR11728:SF1">
    <property type="entry name" value="GLYCEROL-3-PHOSPHATE DEHYDROGENASE [NAD(+)] 2, CHLOROPLASTIC"/>
    <property type="match status" value="1"/>
</dbReference>
<dbReference type="Pfam" id="PF07479">
    <property type="entry name" value="NAD_Gly3P_dh_C"/>
    <property type="match status" value="1"/>
</dbReference>
<dbReference type="Pfam" id="PF01210">
    <property type="entry name" value="NAD_Gly3P_dh_N"/>
    <property type="match status" value="1"/>
</dbReference>
<dbReference type="PIRSF" id="PIRSF000114">
    <property type="entry name" value="Glycerol-3-P_dh"/>
    <property type="match status" value="1"/>
</dbReference>
<dbReference type="PRINTS" id="PR00077">
    <property type="entry name" value="GPDHDRGNASE"/>
</dbReference>
<dbReference type="SUPFAM" id="SSF48179">
    <property type="entry name" value="6-phosphogluconate dehydrogenase C-terminal domain-like"/>
    <property type="match status" value="1"/>
</dbReference>
<dbReference type="SUPFAM" id="SSF51735">
    <property type="entry name" value="NAD(P)-binding Rossmann-fold domains"/>
    <property type="match status" value="1"/>
</dbReference>
<dbReference type="PROSITE" id="PS00957">
    <property type="entry name" value="NAD_G3PDH"/>
    <property type="match status" value="1"/>
</dbReference>
<feature type="chain" id="PRO_0000255350" description="Glycerol-3-phosphate dehydrogenase [NAD(P)+]">
    <location>
        <begin position="1"/>
        <end position="347"/>
    </location>
</feature>
<feature type="active site" description="Proton acceptor" evidence="1">
    <location>
        <position position="207"/>
    </location>
</feature>
<feature type="binding site" evidence="1">
    <location>
        <position position="20"/>
    </location>
    <ligand>
        <name>NADPH</name>
        <dbReference type="ChEBI" id="CHEBI:57783"/>
    </ligand>
</feature>
<feature type="binding site" evidence="1">
    <location>
        <position position="39"/>
    </location>
    <ligand>
        <name>NADPH</name>
        <dbReference type="ChEBI" id="CHEBI:57783"/>
    </ligand>
</feature>
<feature type="binding site" evidence="1">
    <location>
        <position position="118"/>
    </location>
    <ligand>
        <name>NADPH</name>
        <dbReference type="ChEBI" id="CHEBI:57783"/>
    </ligand>
</feature>
<feature type="binding site" evidence="1">
    <location>
        <position position="118"/>
    </location>
    <ligand>
        <name>sn-glycerol 3-phosphate</name>
        <dbReference type="ChEBI" id="CHEBI:57597"/>
    </ligand>
</feature>
<feature type="binding site" evidence="1">
    <location>
        <position position="152"/>
    </location>
    <ligand>
        <name>sn-glycerol 3-phosphate</name>
        <dbReference type="ChEBI" id="CHEBI:57597"/>
    </ligand>
</feature>
<feature type="binding site" evidence="1">
    <location>
        <position position="154"/>
    </location>
    <ligand>
        <name>sn-glycerol 3-phosphate</name>
        <dbReference type="ChEBI" id="CHEBI:57597"/>
    </ligand>
</feature>
<feature type="binding site" evidence="1">
    <location>
        <position position="156"/>
    </location>
    <ligand>
        <name>NADPH</name>
        <dbReference type="ChEBI" id="CHEBI:57783"/>
    </ligand>
</feature>
<feature type="binding site" evidence="1">
    <location>
        <position position="207"/>
    </location>
    <ligand>
        <name>sn-glycerol 3-phosphate</name>
        <dbReference type="ChEBI" id="CHEBI:57597"/>
    </ligand>
</feature>
<feature type="binding site" evidence="1">
    <location>
        <position position="260"/>
    </location>
    <ligand>
        <name>sn-glycerol 3-phosphate</name>
        <dbReference type="ChEBI" id="CHEBI:57597"/>
    </ligand>
</feature>
<feature type="binding site" evidence="1">
    <location>
        <position position="270"/>
    </location>
    <ligand>
        <name>sn-glycerol 3-phosphate</name>
        <dbReference type="ChEBI" id="CHEBI:57597"/>
    </ligand>
</feature>
<feature type="binding site" evidence="1">
    <location>
        <position position="271"/>
    </location>
    <ligand>
        <name>NADPH</name>
        <dbReference type="ChEBI" id="CHEBI:57783"/>
    </ligand>
</feature>
<feature type="binding site" evidence="1">
    <location>
        <position position="271"/>
    </location>
    <ligand>
        <name>sn-glycerol 3-phosphate</name>
        <dbReference type="ChEBI" id="CHEBI:57597"/>
    </ligand>
</feature>
<feature type="binding site" evidence="1">
    <location>
        <position position="272"/>
    </location>
    <ligand>
        <name>sn-glycerol 3-phosphate</name>
        <dbReference type="ChEBI" id="CHEBI:57597"/>
    </ligand>
</feature>
<feature type="binding site" evidence="1">
    <location>
        <position position="295"/>
    </location>
    <ligand>
        <name>NADPH</name>
        <dbReference type="ChEBI" id="CHEBI:57783"/>
    </ligand>
</feature>
<feature type="binding site" evidence="1">
    <location>
        <position position="297"/>
    </location>
    <ligand>
        <name>NADPH</name>
        <dbReference type="ChEBI" id="CHEBI:57783"/>
    </ligand>
</feature>
<gene>
    <name evidence="1" type="primary">gpsA</name>
    <name type="ordered locus">Reut_A0308</name>
</gene>
<reference key="1">
    <citation type="journal article" date="2010" name="PLoS ONE">
        <title>The complete multipartite genome sequence of Cupriavidus necator JMP134, a versatile pollutant degrader.</title>
        <authorList>
            <person name="Lykidis A."/>
            <person name="Perez-Pantoja D."/>
            <person name="Ledger T."/>
            <person name="Mavromatis K."/>
            <person name="Anderson I.J."/>
            <person name="Ivanova N.N."/>
            <person name="Hooper S.D."/>
            <person name="Lapidus A."/>
            <person name="Lucas S."/>
            <person name="Gonzalez B."/>
            <person name="Kyrpides N.C."/>
        </authorList>
    </citation>
    <scope>NUCLEOTIDE SEQUENCE [LARGE SCALE GENOMIC DNA]</scope>
    <source>
        <strain>JMP134 / LMG 1197</strain>
    </source>
</reference>
<keyword id="KW-0963">Cytoplasm</keyword>
<keyword id="KW-0444">Lipid biosynthesis</keyword>
<keyword id="KW-0443">Lipid metabolism</keyword>
<keyword id="KW-0520">NAD</keyword>
<keyword id="KW-0521">NADP</keyword>
<keyword id="KW-0547">Nucleotide-binding</keyword>
<keyword id="KW-0560">Oxidoreductase</keyword>
<keyword id="KW-0594">Phospholipid biosynthesis</keyword>
<keyword id="KW-1208">Phospholipid metabolism</keyword>
<proteinExistence type="inferred from homology"/>